<protein>
    <recommendedName>
        <fullName evidence="1">NADH-quinone oxidoreductase subunit K 2</fullName>
        <ecNumber evidence="1">7.1.1.-</ecNumber>
    </recommendedName>
    <alternativeName>
        <fullName evidence="1">NADH dehydrogenase I subunit K 2</fullName>
    </alternativeName>
    <alternativeName>
        <fullName evidence="1">NDH-1 subunit K 2</fullName>
    </alternativeName>
</protein>
<dbReference type="EC" id="7.1.1.-" evidence="1"/>
<dbReference type="EMBL" id="CP000148">
    <property type="protein sequence ID" value="ABB33557.1"/>
    <property type="molecule type" value="Genomic_DNA"/>
</dbReference>
<dbReference type="SMR" id="Q39QB7"/>
<dbReference type="STRING" id="269799.Gmet_3345"/>
<dbReference type="KEGG" id="gme:Gmet_3345"/>
<dbReference type="eggNOG" id="COG0713">
    <property type="taxonomic scope" value="Bacteria"/>
</dbReference>
<dbReference type="HOGENOM" id="CLU_144724_0_0_7"/>
<dbReference type="Proteomes" id="UP000007073">
    <property type="component" value="Chromosome"/>
</dbReference>
<dbReference type="GO" id="GO:0030964">
    <property type="term" value="C:NADH dehydrogenase complex"/>
    <property type="evidence" value="ECO:0007669"/>
    <property type="project" value="TreeGrafter"/>
</dbReference>
<dbReference type="GO" id="GO:0005886">
    <property type="term" value="C:plasma membrane"/>
    <property type="evidence" value="ECO:0007669"/>
    <property type="project" value="UniProtKB-SubCell"/>
</dbReference>
<dbReference type="GO" id="GO:0050136">
    <property type="term" value="F:NADH:ubiquinone reductase (non-electrogenic) activity"/>
    <property type="evidence" value="ECO:0007669"/>
    <property type="project" value="UniProtKB-UniRule"/>
</dbReference>
<dbReference type="GO" id="GO:0048038">
    <property type="term" value="F:quinone binding"/>
    <property type="evidence" value="ECO:0007669"/>
    <property type="project" value="UniProtKB-KW"/>
</dbReference>
<dbReference type="GO" id="GO:0042773">
    <property type="term" value="P:ATP synthesis coupled electron transport"/>
    <property type="evidence" value="ECO:0007669"/>
    <property type="project" value="InterPro"/>
</dbReference>
<dbReference type="FunFam" id="1.10.287.3510:FF:000001">
    <property type="entry name" value="NADH-quinone oxidoreductase subunit K"/>
    <property type="match status" value="1"/>
</dbReference>
<dbReference type="Gene3D" id="1.10.287.3510">
    <property type="match status" value="1"/>
</dbReference>
<dbReference type="HAMAP" id="MF_01456">
    <property type="entry name" value="NDH1_NuoK"/>
    <property type="match status" value="1"/>
</dbReference>
<dbReference type="InterPro" id="IPR001133">
    <property type="entry name" value="NADH_UbQ_OxRdtase_chain4L/K"/>
</dbReference>
<dbReference type="InterPro" id="IPR039428">
    <property type="entry name" value="NUOK/Mnh_C1-like"/>
</dbReference>
<dbReference type="NCBIfam" id="NF004320">
    <property type="entry name" value="PRK05715.1-2"/>
    <property type="match status" value="1"/>
</dbReference>
<dbReference type="NCBIfam" id="NF004321">
    <property type="entry name" value="PRK05715.1-3"/>
    <property type="match status" value="1"/>
</dbReference>
<dbReference type="NCBIfam" id="NF004323">
    <property type="entry name" value="PRK05715.1-5"/>
    <property type="match status" value="1"/>
</dbReference>
<dbReference type="PANTHER" id="PTHR11434:SF21">
    <property type="entry name" value="NADH DEHYDROGENASE SUBUNIT 4L-RELATED"/>
    <property type="match status" value="1"/>
</dbReference>
<dbReference type="PANTHER" id="PTHR11434">
    <property type="entry name" value="NADH-UBIQUINONE OXIDOREDUCTASE SUBUNIT ND4L"/>
    <property type="match status" value="1"/>
</dbReference>
<dbReference type="Pfam" id="PF00420">
    <property type="entry name" value="Oxidored_q2"/>
    <property type="match status" value="1"/>
</dbReference>
<name>NUOK2_GEOMG</name>
<organism>
    <name type="scientific">Geobacter metallireducens (strain ATCC 53774 / DSM 7210 / GS-15)</name>
    <dbReference type="NCBI Taxonomy" id="269799"/>
    <lineage>
        <taxon>Bacteria</taxon>
        <taxon>Pseudomonadati</taxon>
        <taxon>Thermodesulfobacteriota</taxon>
        <taxon>Desulfuromonadia</taxon>
        <taxon>Geobacterales</taxon>
        <taxon>Geobacteraceae</taxon>
        <taxon>Geobacter</taxon>
    </lineage>
</organism>
<gene>
    <name evidence="1" type="primary">nuoK2</name>
    <name type="ordered locus">Gmet_3345</name>
</gene>
<keyword id="KW-0997">Cell inner membrane</keyword>
<keyword id="KW-1003">Cell membrane</keyword>
<keyword id="KW-0472">Membrane</keyword>
<keyword id="KW-0520">NAD</keyword>
<keyword id="KW-0874">Quinone</keyword>
<keyword id="KW-1185">Reference proteome</keyword>
<keyword id="KW-1278">Translocase</keyword>
<keyword id="KW-0812">Transmembrane</keyword>
<keyword id="KW-1133">Transmembrane helix</keyword>
<keyword id="KW-0813">Transport</keyword>
<keyword id="KW-0830">Ubiquinone</keyword>
<feature type="chain" id="PRO_0000390077" description="NADH-quinone oxidoreductase subunit K 2">
    <location>
        <begin position="1"/>
        <end position="100"/>
    </location>
</feature>
<feature type="transmembrane region" description="Helical" evidence="1">
    <location>
        <begin position="4"/>
        <end position="24"/>
    </location>
</feature>
<feature type="transmembrane region" description="Helical" evidence="1">
    <location>
        <begin position="29"/>
        <end position="49"/>
    </location>
</feature>
<feature type="transmembrane region" description="Helical" evidence="1">
    <location>
        <begin position="60"/>
        <end position="80"/>
    </location>
</feature>
<proteinExistence type="inferred from homology"/>
<sequence>MVSLHSYLILSAILFSIGTIGVLIRRNAIVIFMCVEMMLNSVNLTFIALSKHLGNVDGQIFVFFVMTVAAAEAAVGLALMIAFYKNRESIDVEDIKLMRL</sequence>
<evidence type="ECO:0000255" key="1">
    <source>
        <dbReference type="HAMAP-Rule" id="MF_01456"/>
    </source>
</evidence>
<comment type="function">
    <text evidence="1">NDH-1 shuttles electrons from NADH, via FMN and iron-sulfur (Fe-S) centers, to quinones in the respiratory chain. The immediate electron acceptor for the enzyme in this species is believed to be ubiquinone. Couples the redox reaction to proton translocation (for every two electrons transferred, four hydrogen ions are translocated across the cytoplasmic membrane), and thus conserves the redox energy in a proton gradient.</text>
</comment>
<comment type="catalytic activity">
    <reaction evidence="1">
        <text>a quinone + NADH + 5 H(+)(in) = a quinol + NAD(+) + 4 H(+)(out)</text>
        <dbReference type="Rhea" id="RHEA:57888"/>
        <dbReference type="ChEBI" id="CHEBI:15378"/>
        <dbReference type="ChEBI" id="CHEBI:24646"/>
        <dbReference type="ChEBI" id="CHEBI:57540"/>
        <dbReference type="ChEBI" id="CHEBI:57945"/>
        <dbReference type="ChEBI" id="CHEBI:132124"/>
    </reaction>
</comment>
<comment type="subunit">
    <text evidence="1">NDH-1 is composed of 14 different subunits. Subunits NuoA, H, J, K, L, M, N constitute the membrane sector of the complex.</text>
</comment>
<comment type="subcellular location">
    <subcellularLocation>
        <location evidence="1">Cell inner membrane</location>
        <topology evidence="1">Multi-pass membrane protein</topology>
    </subcellularLocation>
</comment>
<comment type="similarity">
    <text evidence="1">Belongs to the complex I subunit 4L family.</text>
</comment>
<accession>Q39QB7</accession>
<reference key="1">
    <citation type="journal article" date="2009" name="BMC Microbiol.">
        <title>The genome sequence of Geobacter metallireducens: features of metabolism, physiology and regulation common and dissimilar to Geobacter sulfurreducens.</title>
        <authorList>
            <person name="Aklujkar M."/>
            <person name="Krushkal J."/>
            <person name="DiBartolo G."/>
            <person name="Lapidus A."/>
            <person name="Land M.L."/>
            <person name="Lovley D.R."/>
        </authorList>
    </citation>
    <scope>NUCLEOTIDE SEQUENCE [LARGE SCALE GENOMIC DNA]</scope>
    <source>
        <strain>ATCC 53774 / DSM 7210 / GS-15</strain>
    </source>
</reference>